<keyword id="KW-0249">Electron transport</keyword>
<keyword id="KW-0349">Heme</keyword>
<keyword id="KW-0408">Iron</keyword>
<keyword id="KW-0472">Membrane</keyword>
<keyword id="KW-0479">Metal-binding</keyword>
<keyword id="KW-0602">Photosynthesis</keyword>
<keyword id="KW-0604">Photosystem II</keyword>
<keyword id="KW-1185">Reference proteome</keyword>
<keyword id="KW-0732">Signal</keyword>
<keyword id="KW-0793">Thylakoid</keyword>
<keyword id="KW-0813">Transport</keyword>
<sequence>MVFKTLRRTLWLTLAALLAVFQFNLGAAQAAELTAETRTVKLNPQGDNVTLSLKQVAEGKQLFAYACGQCHVGGITKTDPNVGLDPEALALATPPRDSVESLVDYLHNPTTYDGEREISELHPSTKSTDIFPKMRNLTEDDLVAISGHILLQPKIVGTKWGGGKIYY</sequence>
<comment type="function">
    <text evidence="1">One of the extrinsic, lumenal subunits of photosystem II (PSII). PSII is a light-driven water plastoquinone oxidoreductase, using light energy to abstract electrons from H(2)O, generating a proton gradient subsequently used for ATP formation. The extrinsic proteins stabilize the structure of photosystem II oxygen-evolving complex (OEC), the ion environment of oxygen evolution and protect the OEC against heat-induced inactivation. Low-potential cytochrome c that plays a role in the OEC of PSII.</text>
</comment>
<comment type="cofactor">
    <cofactor evidence="1">
        <name>heme c</name>
        <dbReference type="ChEBI" id="CHEBI:61717"/>
    </cofactor>
    <text evidence="1">Binds 1 heme c group covalently per subunit.</text>
</comment>
<comment type="subunit">
    <text evidence="1">PSII is composed of 1 copy each of membrane proteins PsbA, PsbB, PsbC, PsbD, PsbE, PsbF, PsbH, PsbI, PsbJ, PsbK, PsbL, PsbM, PsbT, PsbX, PsbY, PsbZ, Psb30/Ycf12, peripheral proteins PsbO, CyanoQ (PsbQ), PsbU, PsbV and a large number of cofactors. It forms dimeric complexes.</text>
</comment>
<comment type="subcellular location">
    <subcellularLocation>
        <location evidence="1">Cellular thylakoid membrane</location>
        <topology evidence="1">Peripheral membrane protein</topology>
        <orientation evidence="1">Lumenal side</orientation>
    </subcellularLocation>
    <text evidence="1">Associated with photosystem II at the lumenal side of the thylakoid membrane.</text>
</comment>
<comment type="similarity">
    <text evidence="1">Belongs to the cytochrome c family. PsbV subfamily.</text>
</comment>
<comment type="sequence caution" evidence="2">
    <conflict type="erroneous initiation">
        <sequence resource="EMBL-CDS" id="ABB58040"/>
    </conflict>
    <text>Extended N-terminus.</text>
</comment>
<protein>
    <recommendedName>
        <fullName evidence="1">Photosystem II extrinsic protein V</fullName>
        <shortName evidence="1">PsbV</shortName>
    </recommendedName>
    <alternativeName>
        <fullName evidence="1">Cytochrome c-550</fullName>
    </alternativeName>
    <alternativeName>
        <fullName evidence="1">Cytochrome c550</fullName>
    </alternativeName>
    <alternativeName>
        <fullName evidence="1">Low-potential cytochrome c</fullName>
    </alternativeName>
</protein>
<accession>Q31LM9</accession>
<organism>
    <name type="scientific">Synechococcus elongatus (strain ATCC 33912 / PCC 7942 / FACHB-805)</name>
    <name type="common">Anacystis nidulans R2</name>
    <dbReference type="NCBI Taxonomy" id="1140"/>
    <lineage>
        <taxon>Bacteria</taxon>
        <taxon>Bacillati</taxon>
        <taxon>Cyanobacteriota</taxon>
        <taxon>Cyanophyceae</taxon>
        <taxon>Synechococcales</taxon>
        <taxon>Synechococcaceae</taxon>
        <taxon>Synechococcus</taxon>
    </lineage>
</organism>
<reference key="1">
    <citation type="submission" date="2005-08" db="EMBL/GenBank/DDBJ databases">
        <title>Complete sequence of chromosome 1 of Synechococcus elongatus PCC 7942.</title>
        <authorList>
            <consortium name="US DOE Joint Genome Institute"/>
            <person name="Copeland A."/>
            <person name="Lucas S."/>
            <person name="Lapidus A."/>
            <person name="Barry K."/>
            <person name="Detter J.C."/>
            <person name="Glavina T."/>
            <person name="Hammon N."/>
            <person name="Israni S."/>
            <person name="Pitluck S."/>
            <person name="Schmutz J."/>
            <person name="Larimer F."/>
            <person name="Land M."/>
            <person name="Kyrpides N."/>
            <person name="Lykidis A."/>
            <person name="Golden S."/>
            <person name="Richardson P."/>
        </authorList>
    </citation>
    <scope>NUCLEOTIDE SEQUENCE [LARGE SCALE GENOMIC DNA]</scope>
    <source>
        <strain>ATCC 33912 / PCC 7942 / FACHB-805</strain>
    </source>
</reference>
<name>CY550_SYNE7</name>
<dbReference type="EMBL" id="CP000100">
    <property type="protein sequence ID" value="ABB58040.1"/>
    <property type="status" value="ALT_INIT"/>
    <property type="molecule type" value="Genomic_DNA"/>
</dbReference>
<dbReference type="RefSeq" id="WP_039755617.1">
    <property type="nucleotide sequence ID" value="NZ_JACJTX010000001.1"/>
</dbReference>
<dbReference type="SMR" id="Q31LM9"/>
<dbReference type="STRING" id="1140.Synpcc7942_2010"/>
<dbReference type="PaxDb" id="1140-Synpcc7942_2010"/>
<dbReference type="GeneID" id="72430884"/>
<dbReference type="KEGG" id="syf:Synpcc7942_2010"/>
<dbReference type="eggNOG" id="COG2010">
    <property type="taxonomic scope" value="Bacteria"/>
</dbReference>
<dbReference type="HOGENOM" id="CLU_104149_1_0_3"/>
<dbReference type="OrthoDB" id="486949at2"/>
<dbReference type="BioCyc" id="MetaCyc:SYNPCC7942_2010-MONOMER"/>
<dbReference type="BioCyc" id="SYNEL:SYNPCC7942_2010-MONOMER"/>
<dbReference type="Proteomes" id="UP000889800">
    <property type="component" value="Chromosome"/>
</dbReference>
<dbReference type="GO" id="GO:0009523">
    <property type="term" value="C:photosystem II"/>
    <property type="evidence" value="ECO:0007669"/>
    <property type="project" value="UniProtKB-KW"/>
</dbReference>
<dbReference type="GO" id="GO:0031676">
    <property type="term" value="C:plasma membrane-derived thylakoid membrane"/>
    <property type="evidence" value="ECO:0007669"/>
    <property type="project" value="UniProtKB-SubCell"/>
</dbReference>
<dbReference type="GO" id="GO:0009055">
    <property type="term" value="F:electron transfer activity"/>
    <property type="evidence" value="ECO:0007669"/>
    <property type="project" value="InterPro"/>
</dbReference>
<dbReference type="GO" id="GO:0020037">
    <property type="term" value="F:heme binding"/>
    <property type="evidence" value="ECO:0007669"/>
    <property type="project" value="InterPro"/>
</dbReference>
<dbReference type="GO" id="GO:0005506">
    <property type="term" value="F:iron ion binding"/>
    <property type="evidence" value="ECO:0007669"/>
    <property type="project" value="InterPro"/>
</dbReference>
<dbReference type="GO" id="GO:0019684">
    <property type="term" value="P:photosynthesis, light reaction"/>
    <property type="evidence" value="ECO:0007669"/>
    <property type="project" value="UniProtKB-UniRule"/>
</dbReference>
<dbReference type="GO" id="GO:0022904">
    <property type="term" value="P:respiratory electron transport chain"/>
    <property type="evidence" value="ECO:0007669"/>
    <property type="project" value="InterPro"/>
</dbReference>
<dbReference type="Gene3D" id="1.10.760.10">
    <property type="entry name" value="Cytochrome c-like domain"/>
    <property type="match status" value="1"/>
</dbReference>
<dbReference type="HAMAP" id="MF_01378">
    <property type="entry name" value="PSII_Cyt550"/>
    <property type="match status" value="1"/>
</dbReference>
<dbReference type="InterPro" id="IPR009056">
    <property type="entry name" value="Cyt_c-like_dom"/>
</dbReference>
<dbReference type="InterPro" id="IPR036909">
    <property type="entry name" value="Cyt_c-like_dom_sf"/>
</dbReference>
<dbReference type="InterPro" id="IPR029490">
    <property type="entry name" value="Cytochrom_C550"/>
</dbReference>
<dbReference type="InterPro" id="IPR017851">
    <property type="entry name" value="PsbV_cyt_c550"/>
</dbReference>
<dbReference type="InterPro" id="IPR016003">
    <property type="entry name" value="PsbV_cyt_c550-like"/>
</dbReference>
<dbReference type="NCBIfam" id="TIGR03045">
    <property type="entry name" value="PS_II_C550"/>
    <property type="match status" value="1"/>
</dbReference>
<dbReference type="Pfam" id="PF14495">
    <property type="entry name" value="Cytochrom_C550"/>
    <property type="match status" value="1"/>
</dbReference>
<dbReference type="PIRSF" id="PIRSF005890">
    <property type="entry name" value="Phot_II_cyt_c550"/>
    <property type="match status" value="1"/>
</dbReference>
<dbReference type="SUPFAM" id="SSF46626">
    <property type="entry name" value="Cytochrome c"/>
    <property type="match status" value="1"/>
</dbReference>
<dbReference type="PROSITE" id="PS51007">
    <property type="entry name" value="CYTC"/>
    <property type="match status" value="1"/>
</dbReference>
<proteinExistence type="inferred from homology"/>
<gene>
    <name evidence="1" type="primary">psbV</name>
    <name type="ordered locus">Synpcc7942_2010</name>
</gene>
<evidence type="ECO:0000255" key="1">
    <source>
        <dbReference type="HAMAP-Rule" id="MF_01378"/>
    </source>
</evidence>
<evidence type="ECO:0000305" key="2"/>
<feature type="signal peptide" evidence="1">
    <location>
        <begin position="1"/>
        <end position="30"/>
    </location>
</feature>
<feature type="chain" id="PRO_0000295608" description="Photosystem II extrinsic protein V">
    <location>
        <begin position="31"/>
        <end position="167"/>
    </location>
</feature>
<feature type="binding site" description="covalent" evidence="1">
    <location>
        <position position="67"/>
    </location>
    <ligand>
        <name>heme c</name>
        <dbReference type="ChEBI" id="CHEBI:61717"/>
    </ligand>
</feature>
<feature type="binding site" description="covalent" evidence="1">
    <location>
        <position position="70"/>
    </location>
    <ligand>
        <name>heme c</name>
        <dbReference type="ChEBI" id="CHEBI:61717"/>
    </ligand>
</feature>
<feature type="binding site" description="axial binding residue" evidence="1">
    <location>
        <position position="71"/>
    </location>
    <ligand>
        <name>heme c</name>
        <dbReference type="ChEBI" id="CHEBI:61717"/>
    </ligand>
    <ligandPart>
        <name>Fe</name>
        <dbReference type="ChEBI" id="CHEBI:18248"/>
    </ligandPart>
</feature>
<feature type="binding site" description="axial binding residue" evidence="1">
    <location>
        <position position="122"/>
    </location>
    <ligand>
        <name>heme c</name>
        <dbReference type="ChEBI" id="CHEBI:61717"/>
    </ligand>
    <ligandPart>
        <name>Fe</name>
        <dbReference type="ChEBI" id="CHEBI:18248"/>
    </ligandPart>
</feature>